<accession>P59720</accession>
<comment type="function">
    <text evidence="2">Catalyzes the formation of N(7)-methylguanine at position 46 (m7G46) in tRNA.</text>
</comment>
<comment type="catalytic activity">
    <reaction evidence="2">
        <text>guanosine(46) in tRNA + S-adenosyl-L-methionine = N(7)-methylguanosine(46) in tRNA + S-adenosyl-L-homocysteine</text>
        <dbReference type="Rhea" id="RHEA:42708"/>
        <dbReference type="Rhea" id="RHEA-COMP:10188"/>
        <dbReference type="Rhea" id="RHEA-COMP:10189"/>
        <dbReference type="ChEBI" id="CHEBI:57856"/>
        <dbReference type="ChEBI" id="CHEBI:59789"/>
        <dbReference type="ChEBI" id="CHEBI:74269"/>
        <dbReference type="ChEBI" id="CHEBI:74480"/>
        <dbReference type="EC" id="2.1.1.33"/>
    </reaction>
</comment>
<comment type="pathway">
    <text evidence="2">tRNA modification; N(7)-methylguanine-tRNA biosynthesis.</text>
</comment>
<comment type="similarity">
    <text evidence="2">Belongs to the class I-like SAM-binding methyltransferase superfamily. TrmB family.</text>
</comment>
<keyword id="KW-0489">Methyltransferase</keyword>
<keyword id="KW-1185">Reference proteome</keyword>
<keyword id="KW-0949">S-adenosyl-L-methionine</keyword>
<keyword id="KW-0808">Transferase</keyword>
<keyword id="KW-0819">tRNA processing</keyword>
<reference key="1">
    <citation type="journal article" date="2003" name="J. Bacteriol.">
        <title>Complete genome sequence of the ammonia-oxidizing bacterium and obligate chemolithoautotroph Nitrosomonas europaea.</title>
        <authorList>
            <person name="Chain P."/>
            <person name="Lamerdin J.E."/>
            <person name="Larimer F.W."/>
            <person name="Regala W."/>
            <person name="Lao V."/>
            <person name="Land M.L."/>
            <person name="Hauser L."/>
            <person name="Hooper A.B."/>
            <person name="Klotz M.G."/>
            <person name="Norton J."/>
            <person name="Sayavedra-Soto L.A."/>
            <person name="Arciero D.M."/>
            <person name="Hommes N.G."/>
            <person name="Whittaker M.M."/>
            <person name="Arp D.J."/>
        </authorList>
    </citation>
    <scope>NUCLEOTIDE SEQUENCE [LARGE SCALE GENOMIC DNA]</scope>
    <source>
        <strain>ATCC 19718 / CIP 103999 / KCTC 2705 / NBRC 14298</strain>
    </source>
</reference>
<protein>
    <recommendedName>
        <fullName evidence="2">tRNA (guanine-N(7)-)-methyltransferase</fullName>
        <ecNumber evidence="2">2.1.1.33</ecNumber>
    </recommendedName>
    <alternativeName>
        <fullName evidence="2">tRNA (guanine(46)-N(7))-methyltransferase</fullName>
    </alternativeName>
    <alternativeName>
        <fullName evidence="2">tRNA(m7G46)-methyltransferase</fullName>
    </alternativeName>
</protein>
<dbReference type="EC" id="2.1.1.33" evidence="2"/>
<dbReference type="EMBL" id="AL954747">
    <property type="protein sequence ID" value="CAD84194.1"/>
    <property type="molecule type" value="Genomic_DNA"/>
</dbReference>
<dbReference type="RefSeq" id="WP_011110920.1">
    <property type="nucleotide sequence ID" value="NC_004757.1"/>
</dbReference>
<dbReference type="SMR" id="P59720"/>
<dbReference type="STRING" id="228410.NE0283"/>
<dbReference type="GeneID" id="87103488"/>
<dbReference type="KEGG" id="neu:NE0283"/>
<dbReference type="eggNOG" id="COG0220">
    <property type="taxonomic scope" value="Bacteria"/>
</dbReference>
<dbReference type="HOGENOM" id="CLU_050910_0_1_4"/>
<dbReference type="OrthoDB" id="9802090at2"/>
<dbReference type="PhylomeDB" id="P59720"/>
<dbReference type="UniPathway" id="UPA00989"/>
<dbReference type="Proteomes" id="UP000001416">
    <property type="component" value="Chromosome"/>
</dbReference>
<dbReference type="GO" id="GO:0043527">
    <property type="term" value="C:tRNA methyltransferase complex"/>
    <property type="evidence" value="ECO:0007669"/>
    <property type="project" value="TreeGrafter"/>
</dbReference>
<dbReference type="GO" id="GO:0008176">
    <property type="term" value="F:tRNA (guanine(46)-N7)-methyltransferase activity"/>
    <property type="evidence" value="ECO:0007669"/>
    <property type="project" value="UniProtKB-UniRule"/>
</dbReference>
<dbReference type="CDD" id="cd02440">
    <property type="entry name" value="AdoMet_MTases"/>
    <property type="match status" value="1"/>
</dbReference>
<dbReference type="FunFam" id="3.40.50.150:FF:000035">
    <property type="entry name" value="tRNA (guanine-N(7)-)-methyltransferase"/>
    <property type="match status" value="1"/>
</dbReference>
<dbReference type="Gene3D" id="3.40.50.150">
    <property type="entry name" value="Vaccinia Virus protein VP39"/>
    <property type="match status" value="1"/>
</dbReference>
<dbReference type="HAMAP" id="MF_01057">
    <property type="entry name" value="tRNA_methyltr_TrmB"/>
    <property type="match status" value="1"/>
</dbReference>
<dbReference type="InterPro" id="IPR029063">
    <property type="entry name" value="SAM-dependent_MTases_sf"/>
</dbReference>
<dbReference type="InterPro" id="IPR003358">
    <property type="entry name" value="tRNA_(Gua-N-7)_MeTrfase_Trmb"/>
</dbReference>
<dbReference type="InterPro" id="IPR055361">
    <property type="entry name" value="tRNA_methyltr_TrmB_bact"/>
</dbReference>
<dbReference type="NCBIfam" id="TIGR00091">
    <property type="entry name" value="tRNA (guanosine(46)-N7)-methyltransferase TrmB"/>
    <property type="match status" value="1"/>
</dbReference>
<dbReference type="PANTHER" id="PTHR23417">
    <property type="entry name" value="3-DEOXY-D-MANNO-OCTULOSONIC-ACID TRANSFERASE/TRNA GUANINE-N 7 - -METHYLTRANSFERASE"/>
    <property type="match status" value="1"/>
</dbReference>
<dbReference type="PANTHER" id="PTHR23417:SF14">
    <property type="entry name" value="PENTACOTRIPEPTIDE-REPEAT REGION OF PRORP DOMAIN-CONTAINING PROTEIN"/>
    <property type="match status" value="1"/>
</dbReference>
<dbReference type="Pfam" id="PF02390">
    <property type="entry name" value="Methyltransf_4"/>
    <property type="match status" value="1"/>
</dbReference>
<dbReference type="SUPFAM" id="SSF53335">
    <property type="entry name" value="S-adenosyl-L-methionine-dependent methyltransferases"/>
    <property type="match status" value="1"/>
</dbReference>
<dbReference type="PROSITE" id="PS51625">
    <property type="entry name" value="SAM_MT_TRMB"/>
    <property type="match status" value="1"/>
</dbReference>
<gene>
    <name evidence="2" type="primary">trmB</name>
    <name type="ordered locus">NE0283</name>
</gene>
<proteinExistence type="inferred from homology"/>
<evidence type="ECO:0000250" key="1"/>
<evidence type="ECO:0000255" key="2">
    <source>
        <dbReference type="HAMAP-Rule" id="MF_01057"/>
    </source>
</evidence>
<feature type="chain" id="PRO_0000171364" description="tRNA (guanine-N(7)-)-methyltransferase">
    <location>
        <begin position="1"/>
        <end position="224"/>
    </location>
</feature>
<feature type="active site" evidence="1">
    <location>
        <position position="131"/>
    </location>
</feature>
<feature type="binding site" evidence="2">
    <location>
        <position position="56"/>
    </location>
    <ligand>
        <name>S-adenosyl-L-methionine</name>
        <dbReference type="ChEBI" id="CHEBI:59789"/>
    </ligand>
</feature>
<feature type="binding site" evidence="2">
    <location>
        <position position="81"/>
    </location>
    <ligand>
        <name>S-adenosyl-L-methionine</name>
        <dbReference type="ChEBI" id="CHEBI:59789"/>
    </ligand>
</feature>
<feature type="binding site" evidence="2">
    <location>
        <position position="108"/>
    </location>
    <ligand>
        <name>S-adenosyl-L-methionine</name>
        <dbReference type="ChEBI" id="CHEBI:59789"/>
    </ligand>
</feature>
<feature type="binding site" evidence="2">
    <location>
        <position position="131"/>
    </location>
    <ligand>
        <name>S-adenosyl-L-methionine</name>
        <dbReference type="ChEBI" id="CHEBI:59789"/>
    </ligand>
</feature>
<feature type="binding site" evidence="2">
    <location>
        <position position="135"/>
    </location>
    <ligand>
        <name>substrate</name>
    </ligand>
</feature>
<feature type="binding site" evidence="2">
    <location>
        <position position="167"/>
    </location>
    <ligand>
        <name>substrate</name>
    </ligand>
</feature>
<feature type="binding site" evidence="2">
    <location>
        <begin position="202"/>
        <end position="205"/>
    </location>
    <ligand>
        <name>substrate</name>
    </ligand>
</feature>
<organism>
    <name type="scientific">Nitrosomonas europaea (strain ATCC 19718 / CIP 103999 / KCTC 2705 / NBRC 14298)</name>
    <dbReference type="NCBI Taxonomy" id="228410"/>
    <lineage>
        <taxon>Bacteria</taxon>
        <taxon>Pseudomonadati</taxon>
        <taxon>Pseudomonadota</taxon>
        <taxon>Betaproteobacteria</taxon>
        <taxon>Nitrosomonadales</taxon>
        <taxon>Nitrosomonadaceae</taxon>
        <taxon>Nitrosomonas</taxon>
    </lineage>
</organism>
<name>TRMB_NITEU</name>
<sequence>MSSHPPIRSYVLRQGYFSNAQRHAYESLLPRYGIPLTEEPVDLDSIFGRTAPGILEIGSGMGETTAEIARQHPEKDFIAIEVHAPGIGSLLGQIEKHRLTNLRIIPHDAKLVLQQMFTSESLDGIHIFFPDPWPKARHHKRRLIQPDFVSLLCDRLKPGGYLHIATDWEDYATHILHVLRSEERFVNTAVDYAARPAYRPLTKFEQRGMKLGHTIRDIIFTRTA</sequence>